<feature type="chain" id="PRO_0000273207" description="Protein aurora borealis">
    <location>
        <begin position="1"/>
        <end position="534"/>
    </location>
</feature>
<feature type="region of interest" description="Disordered" evidence="4">
    <location>
        <begin position="114"/>
        <end position="146"/>
    </location>
</feature>
<feature type="region of interest" description="Disordered" evidence="4">
    <location>
        <begin position="206"/>
        <end position="232"/>
    </location>
</feature>
<feature type="compositionally biased region" description="Basic and acidic residues" evidence="4">
    <location>
        <begin position="115"/>
        <end position="127"/>
    </location>
</feature>
<feature type="compositionally biased region" description="Low complexity" evidence="4">
    <location>
        <begin position="206"/>
        <end position="223"/>
    </location>
</feature>
<feature type="modified residue" description="Phosphoserine" evidence="2">
    <location>
        <position position="183"/>
    </location>
</feature>
<feature type="modified residue" description="Phosphoserine" evidence="2">
    <location>
        <position position="191"/>
    </location>
</feature>
<feature type="modified residue" description="Phosphoserine" evidence="2">
    <location>
        <position position="250"/>
    </location>
</feature>
<feature type="modified residue" description="Phosphoserine" evidence="3">
    <location>
        <position position="305"/>
    </location>
</feature>
<feature type="modified residue" description="Phosphoserine" evidence="3">
    <location>
        <position position="311"/>
    </location>
</feature>
<feature type="modified residue" description="Omega-N-methylarginine" evidence="3">
    <location>
        <position position="316"/>
    </location>
</feature>
<organism>
    <name type="scientific">Rattus norvegicus</name>
    <name type="common">Rat</name>
    <dbReference type="NCBI Taxonomy" id="10116"/>
    <lineage>
        <taxon>Eukaryota</taxon>
        <taxon>Metazoa</taxon>
        <taxon>Chordata</taxon>
        <taxon>Craniata</taxon>
        <taxon>Vertebrata</taxon>
        <taxon>Euteleostomi</taxon>
        <taxon>Mammalia</taxon>
        <taxon>Eutheria</taxon>
        <taxon>Euarchontoglires</taxon>
        <taxon>Glires</taxon>
        <taxon>Rodentia</taxon>
        <taxon>Myomorpha</taxon>
        <taxon>Muroidea</taxon>
        <taxon>Muridae</taxon>
        <taxon>Murinae</taxon>
        <taxon>Rattus</taxon>
    </lineage>
</organism>
<dbReference type="EMBL" id="BC088204">
    <property type="protein sequence ID" value="AAH88204.1"/>
    <property type="molecule type" value="mRNA"/>
</dbReference>
<dbReference type="RefSeq" id="NP_001014019.1">
    <property type="nucleotide sequence ID" value="NM_001013997.1"/>
</dbReference>
<dbReference type="RefSeq" id="XP_038949303.1">
    <property type="nucleotide sequence ID" value="XM_039093375.2"/>
</dbReference>
<dbReference type="FunCoup" id="Q5M864">
    <property type="interactions" value="1530"/>
</dbReference>
<dbReference type="STRING" id="10116.ENSRNOP00000035098"/>
<dbReference type="PhosphoSitePlus" id="Q5M864"/>
<dbReference type="PaxDb" id="10116-ENSRNOP00000035098"/>
<dbReference type="Ensembl" id="ENSRNOT00000039344.5">
    <property type="protein sequence ID" value="ENSRNOP00000035098.3"/>
    <property type="gene ID" value="ENSRNOG00000024798.6"/>
</dbReference>
<dbReference type="GeneID" id="306102"/>
<dbReference type="KEGG" id="rno:306102"/>
<dbReference type="UCSC" id="RGD:1309522">
    <property type="organism name" value="rat"/>
</dbReference>
<dbReference type="AGR" id="RGD:1309522"/>
<dbReference type="CTD" id="79866"/>
<dbReference type="RGD" id="1309522">
    <property type="gene designation" value="Bora"/>
</dbReference>
<dbReference type="eggNOG" id="ENOG502S85H">
    <property type="taxonomic scope" value="Eukaryota"/>
</dbReference>
<dbReference type="GeneTree" id="ENSGT00390000013790"/>
<dbReference type="HOGENOM" id="CLU_038376_0_0_1"/>
<dbReference type="InParanoid" id="Q5M864"/>
<dbReference type="OMA" id="STWIKEP"/>
<dbReference type="PhylomeDB" id="Q5M864"/>
<dbReference type="TreeFam" id="TF329674"/>
<dbReference type="Reactome" id="R-RNO-2565942">
    <property type="pathway name" value="Regulation of PLK1 Activity at G2/M Transition"/>
</dbReference>
<dbReference type="PRO" id="PR:Q5M864"/>
<dbReference type="Proteomes" id="UP000002494">
    <property type="component" value="Chromosome 15"/>
</dbReference>
<dbReference type="Bgee" id="ENSRNOG00000024798">
    <property type="expression patterns" value="Expressed in thymus and 19 other cell types or tissues"/>
</dbReference>
<dbReference type="GO" id="GO:0005737">
    <property type="term" value="C:cytoplasm"/>
    <property type="evidence" value="ECO:0000318"/>
    <property type="project" value="GO_Central"/>
</dbReference>
<dbReference type="GO" id="GO:0072687">
    <property type="term" value="C:meiotic spindle"/>
    <property type="evidence" value="ECO:0000266"/>
    <property type="project" value="RGD"/>
</dbReference>
<dbReference type="GO" id="GO:0005634">
    <property type="term" value="C:nucleus"/>
    <property type="evidence" value="ECO:0000318"/>
    <property type="project" value="GO_Central"/>
</dbReference>
<dbReference type="GO" id="GO:0019901">
    <property type="term" value="F:protein kinase binding"/>
    <property type="evidence" value="ECO:0000266"/>
    <property type="project" value="RGD"/>
</dbReference>
<dbReference type="GO" id="GO:0051301">
    <property type="term" value="P:cell division"/>
    <property type="evidence" value="ECO:0007669"/>
    <property type="project" value="UniProtKB-KW"/>
</dbReference>
<dbReference type="GO" id="GO:0007088">
    <property type="term" value="P:regulation of mitotic nuclear division"/>
    <property type="evidence" value="ECO:0000250"/>
    <property type="project" value="UniProtKB"/>
</dbReference>
<dbReference type="GO" id="GO:0060236">
    <property type="term" value="P:regulation of mitotic spindle organization"/>
    <property type="evidence" value="ECO:0000250"/>
    <property type="project" value="UniProtKB"/>
</dbReference>
<dbReference type="GO" id="GO:0032880">
    <property type="term" value="P:regulation of protein localization"/>
    <property type="evidence" value="ECO:0000250"/>
    <property type="project" value="UniProtKB"/>
</dbReference>
<dbReference type="InterPro" id="IPR023252">
    <property type="entry name" value="Aurora_borealis_protein"/>
</dbReference>
<dbReference type="PANTHER" id="PTHR14728">
    <property type="entry name" value="PROTEIN AURORA BOREALIS"/>
    <property type="match status" value="1"/>
</dbReference>
<dbReference type="PANTHER" id="PTHR14728:SF2">
    <property type="entry name" value="PROTEIN AURORA BOREALIS"/>
    <property type="match status" value="1"/>
</dbReference>
<dbReference type="Pfam" id="PF15280">
    <property type="entry name" value="BORA_N"/>
    <property type="match status" value="1"/>
</dbReference>
<dbReference type="PRINTS" id="PR02038">
    <property type="entry name" value="AURORABORA"/>
</dbReference>
<gene>
    <name type="primary">Bora</name>
</gene>
<sequence>MGDVSELKMQITPATPGRIPVLNPFESPSDYSNLHEQTLASPSVFKSTKLPTPGEFRWSIDQLAVINPVEIDPEEIHRQASYLSLSRIDKDVEDKRQKAIEEFFTKDVIVPSPWTDHDGKQPSELHPSKCLTSNGDSPVGKKPSLPSQKCNAACQTLLSLPVDFNLEAVLGDYFRADDSVDQSPGNLSSSSLRRKLFLDVNGSISDSLPSASPRSPPNSARGSLEGQFSSSPIQNNAKKYSLGSLTTSPSAICSPTFSPIALQVGKTPLSEHRKFTFHSPEASSGGSSTGIANPSIRSPYIDGCSPIKNWSPRGLRGGPQYLSSLIRVPFALETHSEDEEDNVSSTDVAALGTNAVAAPLQQLDCEPLACGDPFVVSAMPVTQSQSSTCEKDLGLLGDFESERDHDTVDMVDPIDTADESTWIKEPVGNGNSPMAEFVSGIAFSIENSHMCMSPLAESSVLPCESSNVQMDSGYNTQTCGSNITDIVGTESYCKENVTQSFEAQMKPQVNNIKQDHTVQRCWMKTTSPSQCSSL</sequence>
<comment type="function">
    <text evidence="1">Required for the activation of AURKA at the onset of mitosis.</text>
</comment>
<comment type="subunit">
    <text evidence="1">Interacts with AURKA.</text>
</comment>
<comment type="PTM">
    <text evidence="1">Phosphorylated by AURKA.</text>
</comment>
<comment type="similarity">
    <text evidence="5">Belongs to the BORA family.</text>
</comment>
<reference key="1">
    <citation type="journal article" date="2004" name="Genome Res.">
        <title>The status, quality, and expansion of the NIH full-length cDNA project: the Mammalian Gene Collection (MGC).</title>
        <authorList>
            <consortium name="The MGC Project Team"/>
        </authorList>
    </citation>
    <scope>NUCLEOTIDE SEQUENCE [LARGE SCALE MRNA]</scope>
    <source>
        <tissue>Thymus</tissue>
    </source>
</reference>
<name>BORA_RAT</name>
<evidence type="ECO:0000250" key="1"/>
<evidence type="ECO:0000250" key="2">
    <source>
        <dbReference type="UniProtKB" id="Q6PGQ7"/>
    </source>
</evidence>
<evidence type="ECO:0000250" key="3">
    <source>
        <dbReference type="UniProtKB" id="Q8BS90"/>
    </source>
</evidence>
<evidence type="ECO:0000256" key="4">
    <source>
        <dbReference type="SAM" id="MobiDB-lite"/>
    </source>
</evidence>
<evidence type="ECO:0000305" key="5"/>
<proteinExistence type="evidence at transcript level"/>
<accession>Q5M864</accession>
<protein>
    <recommendedName>
        <fullName>Protein aurora borealis</fullName>
    </recommendedName>
</protein>
<keyword id="KW-0131">Cell cycle</keyword>
<keyword id="KW-0132">Cell division</keyword>
<keyword id="KW-0488">Methylation</keyword>
<keyword id="KW-0498">Mitosis</keyword>
<keyword id="KW-0597">Phosphoprotein</keyword>
<keyword id="KW-1185">Reference proteome</keyword>